<comment type="function">
    <text evidence="1">Serine protease.</text>
</comment>
<comment type="subcellular location">
    <subcellularLocation>
        <location evidence="1">Secreted</location>
    </subcellularLocation>
</comment>
<comment type="similarity">
    <text evidence="6">Belongs to the peptidase S1C family.</text>
</comment>
<gene>
    <name type="primary">HTRA4</name>
</gene>
<protein>
    <recommendedName>
        <fullName>Serine protease HTR4</fullName>
        <ecNumber>3.4.21.-</ecNumber>
    </recommendedName>
    <alternativeName>
        <fullName>High-temperature requirement factor A4</fullName>
    </alternativeName>
</protein>
<sequence>MARPLQRPAGLGPFVLLWLLLPAPSGRGVQAGRAWPVPRCPAACEPTRCPPLPRCSVGTAPVLDRCGCCRVCAAAEGEACGGPLGRPCAPGLQCLAPRAPRLLGGRPLGTCGCPAAGATVCGSDGRTYRSLCALRAENRAARLRGALPAVPVQKGDCGDPGTGSAGWLRNKFNFIASVVEKVAPSVVHLQLFRRDRSPLGSEDVPVSSASGFIVSEDGLIVTNAHVLTNQQRIQVELQSGVQYEATVKDVDHKLDLALIKIEPNADLPVLLLGKSSDLRAGEFVVALGSPFSLQNTVTAGIVSTTQRGGKELGLKDSDMDYIQTDAIINHGNSGGPLVNLDGDVIGINTLKVTAGISFAIPSDRIRQFLAEFHERQLKGKALSQKKYLGLRMLPLTMNLLQEMKRQDPEFPDVASGVFVHEVIQGTAAESSGLKDHDVIVSINGLPVTTTTDVIEAVKANDSLSLLVRRKSQTLILTVTPEIIN</sequence>
<reference key="1">
    <citation type="journal article" date="2009" name="Genome Biol.">
        <title>A whole-genome assembly of the domestic cow, Bos taurus.</title>
        <authorList>
            <person name="Zimin A.V."/>
            <person name="Delcher A.L."/>
            <person name="Florea L."/>
            <person name="Kelley D.R."/>
            <person name="Schatz M.C."/>
            <person name="Puiu D."/>
            <person name="Hanrahan F."/>
            <person name="Pertea G."/>
            <person name="Van Tassell C.P."/>
            <person name="Sonstegard T.S."/>
            <person name="Marcais G."/>
            <person name="Roberts M."/>
            <person name="Subramanian P."/>
            <person name="Yorke J.A."/>
            <person name="Salzberg S.L."/>
        </authorList>
    </citation>
    <scope>NUCLEOTIDE SEQUENCE [LARGE SCALE GENOMIC DNA]</scope>
    <source>
        <strain>Hereford</strain>
    </source>
</reference>
<proteinExistence type="inferred from homology"/>
<feature type="signal peptide" evidence="2">
    <location>
        <begin position="1"/>
        <end position="28"/>
    </location>
</feature>
<feature type="chain" id="PRO_0000417599" description="Serine protease HTR4">
    <location>
        <begin position="29"/>
        <end position="484"/>
    </location>
</feature>
<feature type="domain" description="IGFBP N-terminal" evidence="4">
    <location>
        <begin position="36"/>
        <end position="114"/>
    </location>
</feature>
<feature type="domain" description="Kazal-like" evidence="5">
    <location>
        <begin position="105"/>
        <end position="159"/>
    </location>
</feature>
<feature type="domain" description="PDZ" evidence="3">
    <location>
        <begin position="390"/>
        <end position="472"/>
    </location>
</feature>
<feature type="region of interest" description="Serine protease" evidence="1">
    <location>
        <begin position="209"/>
        <end position="369"/>
    </location>
</feature>
<feature type="active site" description="Charge relay system" evidence="2">
    <location>
        <position position="225"/>
    </location>
</feature>
<feature type="active site" description="Charge relay system" evidence="2">
    <location>
        <position position="255"/>
    </location>
</feature>
<feature type="active site" description="Charge relay system" evidence="2">
    <location>
        <position position="333"/>
    </location>
</feature>
<feature type="disulfide bond" evidence="4">
    <location>
        <begin position="40"/>
        <end position="66"/>
    </location>
</feature>
<feature type="disulfide bond" evidence="4">
    <location>
        <begin position="44"/>
        <end position="68"/>
    </location>
</feature>
<feature type="disulfide bond" evidence="4">
    <location>
        <begin position="49"/>
        <end position="69"/>
    </location>
</feature>
<feature type="disulfide bond" evidence="4">
    <location>
        <begin position="55"/>
        <end position="72"/>
    </location>
</feature>
<feature type="disulfide bond" evidence="4">
    <location>
        <begin position="80"/>
        <end position="94"/>
    </location>
</feature>
<feature type="disulfide bond" evidence="4">
    <location>
        <begin position="88"/>
        <end position="111"/>
    </location>
</feature>
<feature type="disulfide bond" evidence="5">
    <location>
        <begin position="113"/>
        <end position="132"/>
    </location>
</feature>
<feature type="disulfide bond" evidence="5">
    <location>
        <begin position="121"/>
        <end position="157"/>
    </location>
</feature>
<dbReference type="EC" id="3.4.21.-"/>
<dbReference type="EMBL" id="DAAA02060867">
    <property type="status" value="NOT_ANNOTATED_CDS"/>
    <property type="molecule type" value="Genomic_DNA"/>
</dbReference>
<dbReference type="SMR" id="E1BJW1"/>
<dbReference type="FunCoup" id="E1BJW1">
    <property type="interactions" value="4"/>
</dbReference>
<dbReference type="STRING" id="9913.ENSBTAP00000004564"/>
<dbReference type="PaxDb" id="9913-ENSBTAP00000004564"/>
<dbReference type="eggNOG" id="ENOG502RMZV">
    <property type="taxonomic scope" value="Eukaryota"/>
</dbReference>
<dbReference type="HOGENOM" id="CLU_020120_6_2_1"/>
<dbReference type="InParanoid" id="E1BJW1"/>
<dbReference type="OrthoDB" id="4217619at2759"/>
<dbReference type="TreeFam" id="TF323480"/>
<dbReference type="Proteomes" id="UP000009136">
    <property type="component" value="Unplaced"/>
</dbReference>
<dbReference type="GO" id="GO:0005576">
    <property type="term" value="C:extracellular region"/>
    <property type="evidence" value="ECO:0007669"/>
    <property type="project" value="UniProtKB-SubCell"/>
</dbReference>
<dbReference type="GO" id="GO:0004252">
    <property type="term" value="F:serine-type endopeptidase activity"/>
    <property type="evidence" value="ECO:0000318"/>
    <property type="project" value="GO_Central"/>
</dbReference>
<dbReference type="GO" id="GO:0043065">
    <property type="term" value="P:positive regulation of apoptotic process"/>
    <property type="evidence" value="ECO:0000318"/>
    <property type="project" value="GO_Central"/>
</dbReference>
<dbReference type="GO" id="GO:0012501">
    <property type="term" value="P:programmed cell death"/>
    <property type="evidence" value="ECO:0000318"/>
    <property type="project" value="GO_Central"/>
</dbReference>
<dbReference type="GO" id="GO:0006508">
    <property type="term" value="P:proteolysis"/>
    <property type="evidence" value="ECO:0000318"/>
    <property type="project" value="GO_Central"/>
</dbReference>
<dbReference type="CDD" id="cd06785">
    <property type="entry name" value="cpPDZ_HtrA-like"/>
    <property type="match status" value="1"/>
</dbReference>
<dbReference type="CDD" id="cd00104">
    <property type="entry name" value="KAZAL_FS"/>
    <property type="match status" value="1"/>
</dbReference>
<dbReference type="FunFam" id="2.40.10.120:FF:000002">
    <property type="entry name" value="HtrA serine peptidase 3"/>
    <property type="match status" value="1"/>
</dbReference>
<dbReference type="Gene3D" id="2.30.42.10">
    <property type="match status" value="1"/>
</dbReference>
<dbReference type="Gene3D" id="2.40.10.120">
    <property type="match status" value="1"/>
</dbReference>
<dbReference type="Gene3D" id="3.30.60.30">
    <property type="match status" value="1"/>
</dbReference>
<dbReference type="Gene3D" id="4.10.40.20">
    <property type="match status" value="1"/>
</dbReference>
<dbReference type="InterPro" id="IPR009030">
    <property type="entry name" value="Growth_fac_rcpt_cys_sf"/>
</dbReference>
<dbReference type="InterPro" id="IPR000867">
    <property type="entry name" value="IGFBP-like"/>
</dbReference>
<dbReference type="InterPro" id="IPR002350">
    <property type="entry name" value="Kazal_dom"/>
</dbReference>
<dbReference type="InterPro" id="IPR036058">
    <property type="entry name" value="Kazal_dom_sf"/>
</dbReference>
<dbReference type="InterPro" id="IPR001478">
    <property type="entry name" value="PDZ"/>
</dbReference>
<dbReference type="InterPro" id="IPR041489">
    <property type="entry name" value="PDZ_6"/>
</dbReference>
<dbReference type="InterPro" id="IPR036034">
    <property type="entry name" value="PDZ_sf"/>
</dbReference>
<dbReference type="InterPro" id="IPR009003">
    <property type="entry name" value="Peptidase_S1_PA"/>
</dbReference>
<dbReference type="InterPro" id="IPR001940">
    <property type="entry name" value="Peptidase_S1C"/>
</dbReference>
<dbReference type="PANTHER" id="PTHR22939">
    <property type="entry name" value="SERINE PROTEASE FAMILY S1C HTRA-RELATED"/>
    <property type="match status" value="1"/>
</dbReference>
<dbReference type="PANTHER" id="PTHR22939:SF105">
    <property type="entry name" value="SERINE PROTEASE HTRA4"/>
    <property type="match status" value="1"/>
</dbReference>
<dbReference type="Pfam" id="PF00219">
    <property type="entry name" value="IGFBP"/>
    <property type="match status" value="1"/>
</dbReference>
<dbReference type="Pfam" id="PF07648">
    <property type="entry name" value="Kazal_2"/>
    <property type="match status" value="1"/>
</dbReference>
<dbReference type="Pfam" id="PF17820">
    <property type="entry name" value="PDZ_6"/>
    <property type="match status" value="1"/>
</dbReference>
<dbReference type="Pfam" id="PF13365">
    <property type="entry name" value="Trypsin_2"/>
    <property type="match status" value="1"/>
</dbReference>
<dbReference type="PRINTS" id="PR00834">
    <property type="entry name" value="PROTEASES2C"/>
</dbReference>
<dbReference type="SMART" id="SM00121">
    <property type="entry name" value="IB"/>
    <property type="match status" value="1"/>
</dbReference>
<dbReference type="SMART" id="SM00280">
    <property type="entry name" value="KAZAL"/>
    <property type="match status" value="1"/>
</dbReference>
<dbReference type="SMART" id="SM00228">
    <property type="entry name" value="PDZ"/>
    <property type="match status" value="1"/>
</dbReference>
<dbReference type="SUPFAM" id="SSF57184">
    <property type="entry name" value="Growth factor receptor domain"/>
    <property type="match status" value="1"/>
</dbReference>
<dbReference type="SUPFAM" id="SSF100895">
    <property type="entry name" value="Kazal-type serine protease inhibitors"/>
    <property type="match status" value="1"/>
</dbReference>
<dbReference type="SUPFAM" id="SSF50156">
    <property type="entry name" value="PDZ domain-like"/>
    <property type="match status" value="1"/>
</dbReference>
<dbReference type="SUPFAM" id="SSF50494">
    <property type="entry name" value="Trypsin-like serine proteases"/>
    <property type="match status" value="1"/>
</dbReference>
<dbReference type="PROSITE" id="PS51323">
    <property type="entry name" value="IGFBP_N_2"/>
    <property type="match status" value="1"/>
</dbReference>
<dbReference type="PROSITE" id="PS51465">
    <property type="entry name" value="KAZAL_2"/>
    <property type="match status" value="1"/>
</dbReference>
<dbReference type="PROSITE" id="PS50106">
    <property type="entry name" value="PDZ"/>
    <property type="match status" value="1"/>
</dbReference>
<accession>E1BJW1</accession>
<organism>
    <name type="scientific">Bos taurus</name>
    <name type="common">Bovine</name>
    <dbReference type="NCBI Taxonomy" id="9913"/>
    <lineage>
        <taxon>Eukaryota</taxon>
        <taxon>Metazoa</taxon>
        <taxon>Chordata</taxon>
        <taxon>Craniata</taxon>
        <taxon>Vertebrata</taxon>
        <taxon>Euteleostomi</taxon>
        <taxon>Mammalia</taxon>
        <taxon>Eutheria</taxon>
        <taxon>Laurasiatheria</taxon>
        <taxon>Artiodactyla</taxon>
        <taxon>Ruminantia</taxon>
        <taxon>Pecora</taxon>
        <taxon>Bovidae</taxon>
        <taxon>Bovinae</taxon>
        <taxon>Bos</taxon>
    </lineage>
</organism>
<name>HTRA4_BOVIN</name>
<keyword id="KW-1015">Disulfide bond</keyword>
<keyword id="KW-0378">Hydrolase</keyword>
<keyword id="KW-0645">Protease</keyword>
<keyword id="KW-1185">Reference proteome</keyword>
<keyword id="KW-0964">Secreted</keyword>
<keyword id="KW-0720">Serine protease</keyword>
<keyword id="KW-0732">Signal</keyword>
<evidence type="ECO:0000250" key="1"/>
<evidence type="ECO:0000255" key="2"/>
<evidence type="ECO:0000255" key="3">
    <source>
        <dbReference type="PROSITE-ProRule" id="PRU00143"/>
    </source>
</evidence>
<evidence type="ECO:0000255" key="4">
    <source>
        <dbReference type="PROSITE-ProRule" id="PRU00653"/>
    </source>
</evidence>
<evidence type="ECO:0000255" key="5">
    <source>
        <dbReference type="PROSITE-ProRule" id="PRU00798"/>
    </source>
</evidence>
<evidence type="ECO:0000305" key="6"/>